<proteinExistence type="evidence at protein level"/>
<dbReference type="EMBL" id="AB023141">
    <property type="protein sequence ID" value="BAA76768.2"/>
    <property type="status" value="ALT_INIT"/>
    <property type="molecule type" value="mRNA"/>
</dbReference>
<dbReference type="EMBL" id="CR933680">
    <property type="protein sequence ID" value="CAI45974.1"/>
    <property type="molecule type" value="mRNA"/>
</dbReference>
<dbReference type="EMBL" id="CH471109">
    <property type="protein sequence ID" value="EAW94682.1"/>
    <property type="molecule type" value="Genomic_DNA"/>
</dbReference>
<dbReference type="EMBL" id="BC139779">
    <property type="protein sequence ID" value="AAI39780.1"/>
    <property type="molecule type" value="mRNA"/>
</dbReference>
<dbReference type="EMBL" id="BC152440">
    <property type="protein sequence ID" value="AAI52441.1"/>
    <property type="molecule type" value="mRNA"/>
</dbReference>
<dbReference type="CCDS" id="CCDS32677.1"/>
<dbReference type="RefSeq" id="NP_001138837.1">
    <property type="nucleotide sequence ID" value="NM_001145365.3"/>
</dbReference>
<dbReference type="RefSeq" id="NP_055712.1">
    <property type="nucleotide sequence ID" value="NM_014897.2"/>
</dbReference>
<dbReference type="RefSeq" id="XP_024306421.1">
    <property type="nucleotide sequence ID" value="XM_024450653.2"/>
</dbReference>
<dbReference type="RefSeq" id="XP_024306423.1">
    <property type="nucleotide sequence ID" value="XM_024450655.2"/>
</dbReference>
<dbReference type="RefSeq" id="XP_047291582.1">
    <property type="nucleotide sequence ID" value="XM_047435626.1"/>
</dbReference>
<dbReference type="RefSeq" id="XP_047291583.1">
    <property type="nucleotide sequence ID" value="XM_047435627.1"/>
</dbReference>
<dbReference type="RefSeq" id="XP_054171459.1">
    <property type="nucleotide sequence ID" value="XM_054315484.1"/>
</dbReference>
<dbReference type="RefSeq" id="XP_054171460.1">
    <property type="nucleotide sequence ID" value="XM_054315485.1"/>
</dbReference>
<dbReference type="RefSeq" id="XP_054171461.1">
    <property type="nucleotide sequence ID" value="XM_054315486.1"/>
</dbReference>
<dbReference type="RefSeq" id="XP_054171462.1">
    <property type="nucleotide sequence ID" value="XM_054315487.1"/>
</dbReference>
<dbReference type="SMR" id="Q9Y2D9"/>
<dbReference type="BioGRID" id="116508">
    <property type="interactions" value="6"/>
</dbReference>
<dbReference type="FunCoup" id="Q9Y2D9">
    <property type="interactions" value="1959"/>
</dbReference>
<dbReference type="IntAct" id="Q9Y2D9">
    <property type="interactions" value="7"/>
</dbReference>
<dbReference type="STRING" id="9606.ENSP00000354686"/>
<dbReference type="GlyGen" id="Q9Y2D9">
    <property type="glycosylation" value="4 sites, 1 O-linked glycan (3 sites)"/>
</dbReference>
<dbReference type="iPTMnet" id="Q9Y2D9"/>
<dbReference type="PhosphoSitePlus" id="Q9Y2D9"/>
<dbReference type="BioMuta" id="ZNF652"/>
<dbReference type="DMDM" id="134035373"/>
<dbReference type="jPOST" id="Q9Y2D9"/>
<dbReference type="MassIVE" id="Q9Y2D9"/>
<dbReference type="PaxDb" id="9606-ENSP00000354686"/>
<dbReference type="PeptideAtlas" id="Q9Y2D9"/>
<dbReference type="ProteomicsDB" id="85745"/>
<dbReference type="Pumba" id="Q9Y2D9"/>
<dbReference type="Antibodypedia" id="30374">
    <property type="antibodies" value="70 antibodies from 20 providers"/>
</dbReference>
<dbReference type="DNASU" id="22834"/>
<dbReference type="Ensembl" id="ENST00000362063.6">
    <property type="protein sequence ID" value="ENSP00000354686.2"/>
    <property type="gene ID" value="ENSG00000198740.9"/>
</dbReference>
<dbReference type="Ensembl" id="ENST00000430262.3">
    <property type="protein sequence ID" value="ENSP00000416305.2"/>
    <property type="gene ID" value="ENSG00000198740.9"/>
</dbReference>
<dbReference type="GeneID" id="22834"/>
<dbReference type="KEGG" id="hsa:22834"/>
<dbReference type="MANE-Select" id="ENST00000430262.3">
    <property type="protein sequence ID" value="ENSP00000416305.2"/>
    <property type="RefSeq nucleotide sequence ID" value="NM_001145365.3"/>
    <property type="RefSeq protein sequence ID" value="NP_001138837.1"/>
</dbReference>
<dbReference type="UCSC" id="uc002iov.5">
    <property type="organism name" value="human"/>
</dbReference>
<dbReference type="AGR" id="HGNC:29147"/>
<dbReference type="CTD" id="22834"/>
<dbReference type="DisGeNET" id="22834"/>
<dbReference type="GeneCards" id="ZNF652"/>
<dbReference type="HGNC" id="HGNC:29147">
    <property type="gene designation" value="ZNF652"/>
</dbReference>
<dbReference type="HPA" id="ENSG00000198740">
    <property type="expression patterns" value="Low tissue specificity"/>
</dbReference>
<dbReference type="MIM" id="613907">
    <property type="type" value="gene"/>
</dbReference>
<dbReference type="neXtProt" id="NX_Q9Y2D9"/>
<dbReference type="OpenTargets" id="ENSG00000198740"/>
<dbReference type="PharmGKB" id="PA134896615"/>
<dbReference type="VEuPathDB" id="HostDB:ENSG00000198740"/>
<dbReference type="eggNOG" id="KOG1721">
    <property type="taxonomic scope" value="Eukaryota"/>
</dbReference>
<dbReference type="GeneTree" id="ENSGT00940000157416"/>
<dbReference type="HOGENOM" id="CLU_002678_74_2_1"/>
<dbReference type="InParanoid" id="Q9Y2D9"/>
<dbReference type="OMA" id="VESCAVH"/>
<dbReference type="OrthoDB" id="427030at2759"/>
<dbReference type="PAN-GO" id="Q9Y2D9">
    <property type="GO annotations" value="4 GO annotations based on evolutionary models"/>
</dbReference>
<dbReference type="PhylomeDB" id="Q9Y2D9"/>
<dbReference type="TreeFam" id="TF332655"/>
<dbReference type="PathwayCommons" id="Q9Y2D9"/>
<dbReference type="SignaLink" id="Q9Y2D9"/>
<dbReference type="SIGNOR" id="Q9Y2D9"/>
<dbReference type="BioGRID-ORCS" id="22834">
    <property type="hits" value="19 hits in 1189 CRISPR screens"/>
</dbReference>
<dbReference type="ChiTaRS" id="ZNF652">
    <property type="organism name" value="human"/>
</dbReference>
<dbReference type="GenomeRNAi" id="22834"/>
<dbReference type="Pharos" id="Q9Y2D9">
    <property type="development level" value="Tbio"/>
</dbReference>
<dbReference type="PRO" id="PR:Q9Y2D9"/>
<dbReference type="Proteomes" id="UP000005640">
    <property type="component" value="Chromosome 17"/>
</dbReference>
<dbReference type="RNAct" id="Q9Y2D9">
    <property type="molecule type" value="protein"/>
</dbReference>
<dbReference type="Bgee" id="ENSG00000198740">
    <property type="expression patterns" value="Expressed in medial globus pallidus and 197 other cell types or tissues"/>
</dbReference>
<dbReference type="ExpressionAtlas" id="Q9Y2D9">
    <property type="expression patterns" value="baseline and differential"/>
</dbReference>
<dbReference type="GO" id="GO:0005634">
    <property type="term" value="C:nucleus"/>
    <property type="evidence" value="ECO:0000318"/>
    <property type="project" value="GO_Central"/>
</dbReference>
<dbReference type="GO" id="GO:0003677">
    <property type="term" value="F:DNA binding"/>
    <property type="evidence" value="ECO:0007669"/>
    <property type="project" value="UniProtKB-KW"/>
</dbReference>
<dbReference type="GO" id="GO:0000981">
    <property type="term" value="F:DNA-binding transcription factor activity, RNA polymerase II-specific"/>
    <property type="evidence" value="ECO:0000318"/>
    <property type="project" value="GO_Central"/>
</dbReference>
<dbReference type="GO" id="GO:0008270">
    <property type="term" value="F:zinc ion binding"/>
    <property type="evidence" value="ECO:0007669"/>
    <property type="project" value="UniProtKB-KW"/>
</dbReference>
<dbReference type="GO" id="GO:0006357">
    <property type="term" value="P:regulation of transcription by RNA polymerase II"/>
    <property type="evidence" value="ECO:0000318"/>
    <property type="project" value="GO_Central"/>
</dbReference>
<dbReference type="FunFam" id="3.30.160.60:FF:000900">
    <property type="entry name" value="Zinc finger and BTB domain containing 47"/>
    <property type="match status" value="1"/>
</dbReference>
<dbReference type="FunFam" id="3.30.160.60:FF:000312">
    <property type="entry name" value="Zinc finger and BTB domain-containing 47"/>
    <property type="match status" value="1"/>
</dbReference>
<dbReference type="FunFam" id="3.30.160.60:FF:000550">
    <property type="entry name" value="Zinc finger and BTB domain-containing 47"/>
    <property type="match status" value="1"/>
</dbReference>
<dbReference type="FunFam" id="3.30.160.60:FF:000166">
    <property type="entry name" value="Zinc finger and BTB domain-containing 49"/>
    <property type="match status" value="1"/>
</dbReference>
<dbReference type="FunFam" id="3.30.160.60:FF:001300">
    <property type="entry name" value="Zinc finger and BTB domain-containing protein 47"/>
    <property type="match status" value="1"/>
</dbReference>
<dbReference type="FunFam" id="3.30.160.60:FF:001378">
    <property type="entry name" value="Zinc finger protein 652"/>
    <property type="match status" value="1"/>
</dbReference>
<dbReference type="FunFam" id="3.30.160.60:FF:000284">
    <property type="entry name" value="Zinc finger protein 652 isoform X1"/>
    <property type="match status" value="1"/>
</dbReference>
<dbReference type="Gene3D" id="3.30.160.60">
    <property type="entry name" value="Classic Zinc Finger"/>
    <property type="match status" value="7"/>
</dbReference>
<dbReference type="InterPro" id="IPR036236">
    <property type="entry name" value="Znf_C2H2_sf"/>
</dbReference>
<dbReference type="InterPro" id="IPR013087">
    <property type="entry name" value="Znf_C2H2_type"/>
</dbReference>
<dbReference type="PANTHER" id="PTHR24393:SF15">
    <property type="entry name" value="IP01243P-RELATED"/>
    <property type="match status" value="1"/>
</dbReference>
<dbReference type="PANTHER" id="PTHR24393">
    <property type="entry name" value="ZINC FINGER PROTEIN"/>
    <property type="match status" value="1"/>
</dbReference>
<dbReference type="Pfam" id="PF00096">
    <property type="entry name" value="zf-C2H2"/>
    <property type="match status" value="7"/>
</dbReference>
<dbReference type="SMART" id="SM00355">
    <property type="entry name" value="ZnF_C2H2"/>
    <property type="match status" value="9"/>
</dbReference>
<dbReference type="SUPFAM" id="SSF57667">
    <property type="entry name" value="beta-beta-alpha zinc fingers"/>
    <property type="match status" value="5"/>
</dbReference>
<dbReference type="PROSITE" id="PS00028">
    <property type="entry name" value="ZINC_FINGER_C2H2_1"/>
    <property type="match status" value="7"/>
</dbReference>
<dbReference type="PROSITE" id="PS50157">
    <property type="entry name" value="ZINC_FINGER_C2H2_2"/>
    <property type="match status" value="9"/>
</dbReference>
<evidence type="ECO:0000250" key="1">
    <source>
        <dbReference type="UniProtKB" id="A1L1J6"/>
    </source>
</evidence>
<evidence type="ECO:0000255" key="2">
    <source>
        <dbReference type="PROSITE-ProRule" id="PRU00042"/>
    </source>
</evidence>
<evidence type="ECO:0000256" key="3">
    <source>
        <dbReference type="SAM" id="MobiDB-lite"/>
    </source>
</evidence>
<evidence type="ECO:0000269" key="4">
    <source>
    </source>
</evidence>
<evidence type="ECO:0000305" key="5"/>
<evidence type="ECO:0007744" key="6">
    <source>
    </source>
</evidence>
<evidence type="ECO:0007744" key="7">
    <source>
    </source>
</evidence>
<reference key="1">
    <citation type="journal article" date="1999" name="DNA Res.">
        <title>Prediction of the coding sequences of unidentified human genes. XIII. The complete sequences of 100 new cDNA clones from brain which code for large proteins in vitro.</title>
        <authorList>
            <person name="Nagase T."/>
            <person name="Ishikawa K."/>
            <person name="Suyama M."/>
            <person name="Kikuno R."/>
            <person name="Hirosawa M."/>
            <person name="Miyajima N."/>
            <person name="Tanaka A."/>
            <person name="Kotani H."/>
            <person name="Nomura N."/>
            <person name="Ohara O."/>
        </authorList>
    </citation>
    <scope>NUCLEOTIDE SEQUENCE [LARGE SCALE MRNA]</scope>
    <source>
        <tissue>Brain</tissue>
    </source>
</reference>
<reference key="2">
    <citation type="submission" date="2005-04" db="EMBL/GenBank/DDBJ databases">
        <authorList>
            <person name="Ohara O."/>
            <person name="Nagase T."/>
            <person name="Kikuno R."/>
        </authorList>
    </citation>
    <scope>SEQUENCE REVISION</scope>
</reference>
<reference key="3">
    <citation type="journal article" date="2007" name="BMC Genomics">
        <title>The full-ORF clone resource of the German cDNA consortium.</title>
        <authorList>
            <person name="Bechtel S."/>
            <person name="Rosenfelder H."/>
            <person name="Duda A."/>
            <person name="Schmidt C.P."/>
            <person name="Ernst U."/>
            <person name="Wellenreuther R."/>
            <person name="Mehrle A."/>
            <person name="Schuster C."/>
            <person name="Bahr A."/>
            <person name="Bloecker H."/>
            <person name="Heubner D."/>
            <person name="Hoerlein A."/>
            <person name="Michel G."/>
            <person name="Wedler H."/>
            <person name="Koehrer K."/>
            <person name="Ottenwaelder B."/>
            <person name="Poustka A."/>
            <person name="Wiemann S."/>
            <person name="Schupp I."/>
        </authorList>
    </citation>
    <scope>NUCLEOTIDE SEQUENCE [LARGE SCALE MRNA]</scope>
    <source>
        <tissue>Testis</tissue>
    </source>
</reference>
<reference key="4">
    <citation type="submission" date="2005-09" db="EMBL/GenBank/DDBJ databases">
        <authorList>
            <person name="Mural R.J."/>
            <person name="Istrail S."/>
            <person name="Sutton G.G."/>
            <person name="Florea L."/>
            <person name="Halpern A.L."/>
            <person name="Mobarry C.M."/>
            <person name="Lippert R."/>
            <person name="Walenz B."/>
            <person name="Shatkay H."/>
            <person name="Dew I."/>
            <person name="Miller J.R."/>
            <person name="Flanigan M.J."/>
            <person name="Edwards N.J."/>
            <person name="Bolanos R."/>
            <person name="Fasulo D."/>
            <person name="Halldorsson B.V."/>
            <person name="Hannenhalli S."/>
            <person name="Turner R."/>
            <person name="Yooseph S."/>
            <person name="Lu F."/>
            <person name="Nusskern D.R."/>
            <person name="Shue B.C."/>
            <person name="Zheng X.H."/>
            <person name="Zhong F."/>
            <person name="Delcher A.L."/>
            <person name="Huson D.H."/>
            <person name="Kravitz S.A."/>
            <person name="Mouchard L."/>
            <person name="Reinert K."/>
            <person name="Remington K.A."/>
            <person name="Clark A.G."/>
            <person name="Waterman M.S."/>
            <person name="Eichler E.E."/>
            <person name="Adams M.D."/>
            <person name="Hunkapiller M.W."/>
            <person name="Myers E.W."/>
            <person name="Venter J.C."/>
        </authorList>
    </citation>
    <scope>NUCLEOTIDE SEQUENCE [LARGE SCALE GENOMIC DNA]</scope>
</reference>
<reference key="5">
    <citation type="journal article" date="2004" name="Genome Res.">
        <title>The status, quality, and expansion of the NIH full-length cDNA project: the Mammalian Gene Collection (MGC).</title>
        <authorList>
            <consortium name="The MGC Project Team"/>
        </authorList>
    </citation>
    <scope>NUCLEOTIDE SEQUENCE [LARGE SCALE MRNA]</scope>
</reference>
<reference key="6">
    <citation type="journal article" date="2006" name="Mol. Cancer Res.">
        <title>ZNF652, a novel zinc finger protein, interacts with the putative breast tumor suppressor CBFA2T3 to repress transcription.</title>
        <authorList>
            <person name="Kumar R."/>
            <person name="Manning J."/>
            <person name="Spendlove H.E."/>
            <person name="Kremmidiotis G."/>
            <person name="McKirdy R."/>
            <person name="Lee J."/>
            <person name="Millband D.N."/>
            <person name="Cheney K.M."/>
            <person name="Stampfer M.R."/>
            <person name="Dwivedi P.P."/>
            <person name="Morris H.A."/>
            <person name="Callen D.F."/>
        </authorList>
    </citation>
    <scope>FUNCTION</scope>
    <scope>INTERACTION WITH CBFA2T3</scope>
    <scope>TISSUE SPECIFICITY</scope>
</reference>
<reference key="7">
    <citation type="journal article" date="2008" name="J. Proteome Res.">
        <title>Combining protein-based IMAC, peptide-based IMAC, and MudPIT for efficient phosphoproteomic analysis.</title>
        <authorList>
            <person name="Cantin G.T."/>
            <person name="Yi W."/>
            <person name="Lu B."/>
            <person name="Park S.K."/>
            <person name="Xu T."/>
            <person name="Lee J.-D."/>
            <person name="Yates J.R. III"/>
        </authorList>
    </citation>
    <scope>IDENTIFICATION BY MASS SPECTROMETRY [LARGE SCALE ANALYSIS]</scope>
    <source>
        <tissue>Cervix carcinoma</tissue>
    </source>
</reference>
<reference key="8">
    <citation type="journal article" date="2009" name="Sci. Signal.">
        <title>Quantitative phosphoproteomic analysis of T cell receptor signaling reveals system-wide modulation of protein-protein interactions.</title>
        <authorList>
            <person name="Mayya V."/>
            <person name="Lundgren D.H."/>
            <person name="Hwang S.-I."/>
            <person name="Rezaul K."/>
            <person name="Wu L."/>
            <person name="Eng J.K."/>
            <person name="Rodionov V."/>
            <person name="Han D.K."/>
        </authorList>
    </citation>
    <scope>PHOSPHORYLATION [LARGE SCALE ANALYSIS] AT SER-197 AND SER-204</scope>
    <scope>IDENTIFICATION BY MASS SPECTROMETRY [LARGE SCALE ANALYSIS]</scope>
    <source>
        <tissue>Leukemic T-cell</tissue>
    </source>
</reference>
<reference key="9">
    <citation type="journal article" date="2010" name="Sci. Signal.">
        <title>Quantitative phosphoproteomics reveals widespread full phosphorylation site occupancy during mitosis.</title>
        <authorList>
            <person name="Olsen J.V."/>
            <person name="Vermeulen M."/>
            <person name="Santamaria A."/>
            <person name="Kumar C."/>
            <person name="Miller M.L."/>
            <person name="Jensen L.J."/>
            <person name="Gnad F."/>
            <person name="Cox J."/>
            <person name="Jensen T.S."/>
            <person name="Nigg E.A."/>
            <person name="Brunak S."/>
            <person name="Mann M."/>
        </authorList>
    </citation>
    <scope>IDENTIFICATION BY MASS SPECTROMETRY [LARGE SCALE ANALYSIS]</scope>
    <source>
        <tissue>Cervix carcinoma</tissue>
    </source>
</reference>
<reference key="10">
    <citation type="journal article" date="2013" name="J. Proteome Res.">
        <title>Toward a comprehensive characterization of a human cancer cell phosphoproteome.</title>
        <authorList>
            <person name="Zhou H."/>
            <person name="Di Palma S."/>
            <person name="Preisinger C."/>
            <person name="Peng M."/>
            <person name="Polat A.N."/>
            <person name="Heck A.J."/>
            <person name="Mohammed S."/>
        </authorList>
    </citation>
    <scope>PHOSPHORYLATION [LARGE SCALE ANALYSIS] AT SER-57; SER-197 AND SER-204</scope>
    <scope>IDENTIFICATION BY MASS SPECTROMETRY [LARGE SCALE ANALYSIS]</scope>
    <source>
        <tissue>Cervix carcinoma</tissue>
        <tissue>Erythroleukemia</tissue>
    </source>
</reference>
<reference key="11">
    <citation type="journal article" date="2014" name="J. Proteomics">
        <title>An enzyme assisted RP-RPLC approach for in-depth analysis of human liver phosphoproteome.</title>
        <authorList>
            <person name="Bian Y."/>
            <person name="Song C."/>
            <person name="Cheng K."/>
            <person name="Dong M."/>
            <person name="Wang F."/>
            <person name="Huang J."/>
            <person name="Sun D."/>
            <person name="Wang L."/>
            <person name="Ye M."/>
            <person name="Zou H."/>
        </authorList>
    </citation>
    <scope>IDENTIFICATION BY MASS SPECTROMETRY [LARGE SCALE ANALYSIS]</scope>
    <source>
        <tissue>Liver</tissue>
    </source>
</reference>
<accession>Q9Y2D9</accession>
<accession>A4QPD9</accession>
<accession>Q5H9Q0</accession>
<sequence>MSHTASSCQELVENCAVHVAGMAQEDSRRGQVPSSFYHGANQELDLSTKVYKRESGSPYSVLVDTKMSKPHLHETEEQPYFRETRAVSDVHAVKEDRENSDDTEEEEEEVSYKREQIIVEVNLNNQTLNVSKGEKGVSSQSKETPVLKTSSEEEEEESEEEATDDSNDYGENEKQKKKEKIVEKVSVTQRRTRRAASVAAATTSPTPRTTRGRRKSVEPPKRKKRATKEPKAPVQKAKCEEKETLTCEKCPRVFNTRWYLEKHMNVTHRRMQICDKCGKKFVLESELSLHQQTDCEKNIQCVSCNKSFKKLWSLHEHIKIVHGYAEKKFSCEICEKKFYTMAHVRKHMVAHTKDMPFTCETCGKSFKRSMSLKVHSLQHSGEKPFRCENCDERFQYKYQLRSHMSIHIGHKQFMCQWCGKDFNMKQYFDEHMKTHTGEKPFICEICGKSFTSRPNMKRHRRTHTGEKPYPCDVCGQRFRFSNMLKAHKEKCFRVTSPVNVPPAVQIPLTTSPATPVPSVVNTATTPTPPINMNPVSTLPPRPIPHPFSHLHIHPHPHHPHHLPIPPVPHLPPPPALFKSEPLNHRGQSEDNFLRHLAEKNSSAQHH</sequence>
<gene>
    <name type="primary">ZNF652</name>
    <name type="synonym">KIAA0924</name>
</gene>
<protein>
    <recommendedName>
        <fullName>Zinc finger protein 652</fullName>
    </recommendedName>
</protein>
<comment type="function">
    <text evidence="4">Functions as a transcriptional repressor.</text>
</comment>
<comment type="subunit">
    <text evidence="4">Interacts with CBFA2T3.</text>
</comment>
<comment type="interaction">
    <interactant intactId="EBI-1190229">
        <id>Q9Y2D9</id>
    </interactant>
    <interactant intactId="EBI-1190217">
        <id>O75081</id>
        <label>CBFA2T3</label>
    </interactant>
    <organismsDiffer>false</organismsDiffer>
    <experiments>2</experiments>
</comment>
<comment type="subcellular location">
    <subcellularLocation>
        <location evidence="5">Nucleus</location>
    </subcellularLocation>
</comment>
<comment type="tissue specificity">
    <text evidence="4">Widely expressed with higher expression in breast, prostate, vulva and pancreas.</text>
</comment>
<comment type="similarity">
    <text evidence="5">Belongs to the krueppel C2H2-type zinc-finger protein family.</text>
</comment>
<comment type="sequence caution" evidence="5">
    <conflict type="erroneous initiation">
        <sequence resource="EMBL-CDS" id="BAA76768"/>
    </conflict>
</comment>
<keyword id="KW-0238">DNA-binding</keyword>
<keyword id="KW-0479">Metal-binding</keyword>
<keyword id="KW-0539">Nucleus</keyword>
<keyword id="KW-0597">Phosphoprotein</keyword>
<keyword id="KW-1267">Proteomics identification</keyword>
<keyword id="KW-1185">Reference proteome</keyword>
<keyword id="KW-0677">Repeat</keyword>
<keyword id="KW-0678">Repressor</keyword>
<keyword id="KW-0804">Transcription</keyword>
<keyword id="KW-0805">Transcription regulation</keyword>
<keyword id="KW-0862">Zinc</keyword>
<keyword id="KW-0863">Zinc-finger</keyword>
<organism>
    <name type="scientific">Homo sapiens</name>
    <name type="common">Human</name>
    <dbReference type="NCBI Taxonomy" id="9606"/>
    <lineage>
        <taxon>Eukaryota</taxon>
        <taxon>Metazoa</taxon>
        <taxon>Chordata</taxon>
        <taxon>Craniata</taxon>
        <taxon>Vertebrata</taxon>
        <taxon>Euteleostomi</taxon>
        <taxon>Mammalia</taxon>
        <taxon>Eutheria</taxon>
        <taxon>Euarchontoglires</taxon>
        <taxon>Primates</taxon>
        <taxon>Haplorrhini</taxon>
        <taxon>Catarrhini</taxon>
        <taxon>Hominidae</taxon>
        <taxon>Homo</taxon>
    </lineage>
</organism>
<name>ZN652_HUMAN</name>
<feature type="chain" id="PRO_0000280428" description="Zinc finger protein 652">
    <location>
        <begin position="1"/>
        <end position="606"/>
    </location>
</feature>
<feature type="zinc finger region" description="C2H2-type 1" evidence="2">
    <location>
        <begin position="245"/>
        <end position="268"/>
    </location>
</feature>
<feature type="zinc finger region" description="C2H2-type 2; degenerate" evidence="2">
    <location>
        <begin position="272"/>
        <end position="294"/>
    </location>
</feature>
<feature type="zinc finger region" description="C2H2-type 3" evidence="2">
    <location>
        <begin position="299"/>
        <end position="322"/>
    </location>
</feature>
<feature type="zinc finger region" description="C2H2-type 4" evidence="2">
    <location>
        <begin position="329"/>
        <end position="351"/>
    </location>
</feature>
<feature type="zinc finger region" description="C2H2-type 5" evidence="2">
    <location>
        <begin position="357"/>
        <end position="379"/>
    </location>
</feature>
<feature type="zinc finger region" description="C2H2-type 6" evidence="2">
    <location>
        <begin position="385"/>
        <end position="407"/>
    </location>
</feature>
<feature type="zinc finger region" description="C2H2-type 7" evidence="2">
    <location>
        <begin position="413"/>
        <end position="435"/>
    </location>
</feature>
<feature type="zinc finger region" description="C2H2-type 8" evidence="2">
    <location>
        <begin position="441"/>
        <end position="463"/>
    </location>
</feature>
<feature type="zinc finger region" description="C2H2-type 9; degenerate" evidence="2">
    <location>
        <begin position="469"/>
        <end position="492"/>
    </location>
</feature>
<feature type="region of interest" description="Disordered" evidence="3">
    <location>
        <begin position="71"/>
        <end position="113"/>
    </location>
</feature>
<feature type="region of interest" description="Disordered" evidence="3">
    <location>
        <begin position="130"/>
        <end position="235"/>
    </location>
</feature>
<feature type="region of interest" description="Mediates interaction with CBFA2T3" evidence="4">
    <location>
        <begin position="498"/>
        <end position="606"/>
    </location>
</feature>
<feature type="compositionally biased region" description="Basic and acidic residues" evidence="3">
    <location>
        <begin position="71"/>
        <end position="97"/>
    </location>
</feature>
<feature type="compositionally biased region" description="Acidic residues" evidence="3">
    <location>
        <begin position="98"/>
        <end position="109"/>
    </location>
</feature>
<feature type="compositionally biased region" description="Polar residues" evidence="3">
    <location>
        <begin position="137"/>
        <end position="149"/>
    </location>
</feature>
<feature type="compositionally biased region" description="Acidic residues" evidence="3">
    <location>
        <begin position="152"/>
        <end position="170"/>
    </location>
</feature>
<feature type="compositionally biased region" description="Basic and acidic residues" evidence="3">
    <location>
        <begin position="171"/>
        <end position="183"/>
    </location>
</feature>
<feature type="compositionally biased region" description="Low complexity" evidence="3">
    <location>
        <begin position="184"/>
        <end position="209"/>
    </location>
</feature>
<feature type="modified residue" description="Phosphoserine" evidence="7">
    <location>
        <position position="57"/>
    </location>
</feature>
<feature type="modified residue" description="Phosphoserine" evidence="1">
    <location>
        <position position="100"/>
    </location>
</feature>
<feature type="modified residue" description="Phosphothreonine" evidence="1">
    <location>
        <position position="103"/>
    </location>
</feature>
<feature type="modified residue" description="Phosphoserine" evidence="6 7">
    <location>
        <position position="197"/>
    </location>
</feature>
<feature type="modified residue" description="Phosphoserine" evidence="6 7">
    <location>
        <position position="204"/>
    </location>
</feature>